<organism>
    <name type="scientific">Actinobacillus pleuropneumoniae serotype 7 (strain AP76)</name>
    <dbReference type="NCBI Taxonomy" id="537457"/>
    <lineage>
        <taxon>Bacteria</taxon>
        <taxon>Pseudomonadati</taxon>
        <taxon>Pseudomonadota</taxon>
        <taxon>Gammaproteobacteria</taxon>
        <taxon>Pasteurellales</taxon>
        <taxon>Pasteurellaceae</taxon>
        <taxon>Actinobacillus</taxon>
    </lineage>
</organism>
<accession>B3H250</accession>
<protein>
    <recommendedName>
        <fullName evidence="1">Tetraacyldisaccharide 4'-kinase</fullName>
        <ecNumber evidence="1">2.7.1.130</ecNumber>
    </recommendedName>
    <alternativeName>
        <fullName evidence="1">Lipid A 4'-kinase</fullName>
    </alternativeName>
</protein>
<feature type="chain" id="PRO_1000191518" description="Tetraacyldisaccharide 4'-kinase">
    <location>
        <begin position="1"/>
        <end position="326"/>
    </location>
</feature>
<feature type="binding site" evidence="1">
    <location>
        <begin position="53"/>
        <end position="60"/>
    </location>
    <ligand>
        <name>ATP</name>
        <dbReference type="ChEBI" id="CHEBI:30616"/>
    </ligand>
</feature>
<keyword id="KW-0067">ATP-binding</keyword>
<keyword id="KW-0418">Kinase</keyword>
<keyword id="KW-0441">Lipid A biosynthesis</keyword>
<keyword id="KW-0444">Lipid biosynthesis</keyword>
<keyword id="KW-0443">Lipid metabolism</keyword>
<keyword id="KW-0547">Nucleotide-binding</keyword>
<keyword id="KW-0808">Transferase</keyword>
<gene>
    <name evidence="1" type="primary">lpxK</name>
    <name type="ordered locus">APP7_1328</name>
</gene>
<sequence length="326" mass="36275">MNIWQSTSIITWLLAPFSLLFWLVSQIRLFLFRKKILKSYRSPVPVLVVGNISVGGNGKTPVVVWLVEQLQQRGVKVGVISRGYGGKSKDFPQLVTNQSSAEMVGDEPVLIVQRTGVPLAISANRQQSIELLLNQFKLDLIVTDDGLQHYALQRDIEWVVVDGIRRFGNGFVLPAGGLRELPSRLQTVQAIICNGGIAHQNEHLMTLEPEFAVNLRTGEQKPITDFIGQECVAIAGIGHPPRFFNMLENLGVKLLKTQGFADHQAFEPAQLKALAAEQIPLLMTEKDAVKCRTFAQQNWWYVPVSAKFSPESTACLLEPILKRLGK</sequence>
<name>LPXK_ACTP7</name>
<evidence type="ECO:0000255" key="1">
    <source>
        <dbReference type="HAMAP-Rule" id="MF_00409"/>
    </source>
</evidence>
<reference key="1">
    <citation type="submission" date="2008-06" db="EMBL/GenBank/DDBJ databases">
        <title>Genome and proteome analysis of A. pleuropneumoniae serotype 7.</title>
        <authorList>
            <person name="Linke B."/>
            <person name="Buettner F."/>
            <person name="Martinez-Arias R."/>
            <person name="Goesmann A."/>
            <person name="Baltes N."/>
            <person name="Tegetmeyer H."/>
            <person name="Singh M."/>
            <person name="Gerlach G.F."/>
        </authorList>
    </citation>
    <scope>NUCLEOTIDE SEQUENCE [LARGE SCALE GENOMIC DNA]</scope>
    <source>
        <strain>AP76</strain>
    </source>
</reference>
<dbReference type="EC" id="2.7.1.130" evidence="1"/>
<dbReference type="EMBL" id="CP001091">
    <property type="protein sequence ID" value="ACE61980.1"/>
    <property type="molecule type" value="Genomic_DNA"/>
</dbReference>
<dbReference type="RefSeq" id="WP_005598322.1">
    <property type="nucleotide sequence ID" value="NC_010939.1"/>
</dbReference>
<dbReference type="SMR" id="B3H250"/>
<dbReference type="GeneID" id="48599520"/>
<dbReference type="KEGG" id="apa:APP7_1328"/>
<dbReference type="HOGENOM" id="CLU_038816_2_0_6"/>
<dbReference type="UniPathway" id="UPA00359">
    <property type="reaction ID" value="UER00482"/>
</dbReference>
<dbReference type="Proteomes" id="UP000001226">
    <property type="component" value="Chromosome"/>
</dbReference>
<dbReference type="GO" id="GO:0005886">
    <property type="term" value="C:plasma membrane"/>
    <property type="evidence" value="ECO:0007669"/>
    <property type="project" value="TreeGrafter"/>
</dbReference>
<dbReference type="GO" id="GO:0005524">
    <property type="term" value="F:ATP binding"/>
    <property type="evidence" value="ECO:0007669"/>
    <property type="project" value="UniProtKB-UniRule"/>
</dbReference>
<dbReference type="GO" id="GO:0009029">
    <property type="term" value="F:tetraacyldisaccharide 4'-kinase activity"/>
    <property type="evidence" value="ECO:0007669"/>
    <property type="project" value="UniProtKB-UniRule"/>
</dbReference>
<dbReference type="GO" id="GO:0009245">
    <property type="term" value="P:lipid A biosynthetic process"/>
    <property type="evidence" value="ECO:0007669"/>
    <property type="project" value="UniProtKB-UniRule"/>
</dbReference>
<dbReference type="GO" id="GO:0009244">
    <property type="term" value="P:lipopolysaccharide core region biosynthetic process"/>
    <property type="evidence" value="ECO:0007669"/>
    <property type="project" value="TreeGrafter"/>
</dbReference>
<dbReference type="HAMAP" id="MF_00409">
    <property type="entry name" value="LpxK"/>
    <property type="match status" value="1"/>
</dbReference>
<dbReference type="InterPro" id="IPR003758">
    <property type="entry name" value="LpxK"/>
</dbReference>
<dbReference type="InterPro" id="IPR027417">
    <property type="entry name" value="P-loop_NTPase"/>
</dbReference>
<dbReference type="NCBIfam" id="TIGR00682">
    <property type="entry name" value="lpxK"/>
    <property type="match status" value="1"/>
</dbReference>
<dbReference type="PANTHER" id="PTHR42724">
    <property type="entry name" value="TETRAACYLDISACCHARIDE 4'-KINASE"/>
    <property type="match status" value="1"/>
</dbReference>
<dbReference type="PANTHER" id="PTHR42724:SF1">
    <property type="entry name" value="TETRAACYLDISACCHARIDE 4'-KINASE, MITOCHONDRIAL-RELATED"/>
    <property type="match status" value="1"/>
</dbReference>
<dbReference type="Pfam" id="PF02606">
    <property type="entry name" value="LpxK"/>
    <property type="match status" value="1"/>
</dbReference>
<dbReference type="SUPFAM" id="SSF52540">
    <property type="entry name" value="P-loop containing nucleoside triphosphate hydrolases"/>
    <property type="match status" value="1"/>
</dbReference>
<proteinExistence type="inferred from homology"/>
<comment type="function">
    <text evidence="1">Transfers the gamma-phosphate of ATP to the 4'-position of a tetraacyldisaccharide 1-phosphate intermediate (termed DS-1-P) to form tetraacyldisaccharide 1,4'-bis-phosphate (lipid IVA).</text>
</comment>
<comment type="catalytic activity">
    <reaction evidence="1">
        <text>a lipid A disaccharide + ATP = a lipid IVA + ADP + H(+)</text>
        <dbReference type="Rhea" id="RHEA:67840"/>
        <dbReference type="ChEBI" id="CHEBI:15378"/>
        <dbReference type="ChEBI" id="CHEBI:30616"/>
        <dbReference type="ChEBI" id="CHEBI:176343"/>
        <dbReference type="ChEBI" id="CHEBI:176425"/>
        <dbReference type="ChEBI" id="CHEBI:456216"/>
        <dbReference type="EC" id="2.7.1.130"/>
    </reaction>
</comment>
<comment type="pathway">
    <text evidence="1">Glycolipid biosynthesis; lipid IV(A) biosynthesis; lipid IV(A) from (3R)-3-hydroxytetradecanoyl-[acyl-carrier-protein] and UDP-N-acetyl-alpha-D-glucosamine: step 6/6.</text>
</comment>
<comment type="similarity">
    <text evidence="1">Belongs to the LpxK family.</text>
</comment>